<name>LIPA_VIBVU</name>
<accession>Q8DFD1</accession>
<dbReference type="EC" id="2.8.1.8" evidence="1"/>
<dbReference type="EMBL" id="AE016795">
    <property type="protein sequence ID" value="AAO08817.1"/>
    <property type="molecule type" value="Genomic_DNA"/>
</dbReference>
<dbReference type="RefSeq" id="WP_011078392.1">
    <property type="nucleotide sequence ID" value="NC_004459.3"/>
</dbReference>
<dbReference type="SMR" id="Q8DFD1"/>
<dbReference type="KEGG" id="vvu:VV1_0284"/>
<dbReference type="HOGENOM" id="CLU_033144_2_1_6"/>
<dbReference type="UniPathway" id="UPA00538">
    <property type="reaction ID" value="UER00593"/>
</dbReference>
<dbReference type="Proteomes" id="UP000002275">
    <property type="component" value="Chromosome 1"/>
</dbReference>
<dbReference type="GO" id="GO:0005737">
    <property type="term" value="C:cytoplasm"/>
    <property type="evidence" value="ECO:0007669"/>
    <property type="project" value="UniProtKB-SubCell"/>
</dbReference>
<dbReference type="GO" id="GO:0051539">
    <property type="term" value="F:4 iron, 4 sulfur cluster binding"/>
    <property type="evidence" value="ECO:0007669"/>
    <property type="project" value="UniProtKB-UniRule"/>
</dbReference>
<dbReference type="GO" id="GO:0016992">
    <property type="term" value="F:lipoate synthase activity"/>
    <property type="evidence" value="ECO:0007669"/>
    <property type="project" value="UniProtKB-UniRule"/>
</dbReference>
<dbReference type="GO" id="GO:0046872">
    <property type="term" value="F:metal ion binding"/>
    <property type="evidence" value="ECO:0007669"/>
    <property type="project" value="UniProtKB-KW"/>
</dbReference>
<dbReference type="CDD" id="cd01335">
    <property type="entry name" value="Radical_SAM"/>
    <property type="match status" value="1"/>
</dbReference>
<dbReference type="FunFam" id="3.20.20.70:FF:000023">
    <property type="entry name" value="Lipoyl synthase"/>
    <property type="match status" value="1"/>
</dbReference>
<dbReference type="Gene3D" id="3.20.20.70">
    <property type="entry name" value="Aldolase class I"/>
    <property type="match status" value="1"/>
</dbReference>
<dbReference type="HAMAP" id="MF_00206">
    <property type="entry name" value="Lipoyl_synth"/>
    <property type="match status" value="1"/>
</dbReference>
<dbReference type="InterPro" id="IPR013785">
    <property type="entry name" value="Aldolase_TIM"/>
</dbReference>
<dbReference type="InterPro" id="IPR006638">
    <property type="entry name" value="Elp3/MiaA/NifB-like_rSAM"/>
</dbReference>
<dbReference type="InterPro" id="IPR031691">
    <property type="entry name" value="LIAS_N"/>
</dbReference>
<dbReference type="InterPro" id="IPR003698">
    <property type="entry name" value="Lipoyl_synth"/>
</dbReference>
<dbReference type="InterPro" id="IPR007197">
    <property type="entry name" value="rSAM"/>
</dbReference>
<dbReference type="NCBIfam" id="TIGR00510">
    <property type="entry name" value="lipA"/>
    <property type="match status" value="1"/>
</dbReference>
<dbReference type="NCBIfam" id="NF004019">
    <property type="entry name" value="PRK05481.1"/>
    <property type="match status" value="1"/>
</dbReference>
<dbReference type="NCBIfam" id="NF009544">
    <property type="entry name" value="PRK12928.1"/>
    <property type="match status" value="1"/>
</dbReference>
<dbReference type="PANTHER" id="PTHR10949">
    <property type="entry name" value="LIPOYL SYNTHASE"/>
    <property type="match status" value="1"/>
</dbReference>
<dbReference type="PANTHER" id="PTHR10949:SF0">
    <property type="entry name" value="LIPOYL SYNTHASE, MITOCHONDRIAL"/>
    <property type="match status" value="1"/>
</dbReference>
<dbReference type="Pfam" id="PF16881">
    <property type="entry name" value="LIAS_N"/>
    <property type="match status" value="1"/>
</dbReference>
<dbReference type="Pfam" id="PF04055">
    <property type="entry name" value="Radical_SAM"/>
    <property type="match status" value="1"/>
</dbReference>
<dbReference type="PIRSF" id="PIRSF005963">
    <property type="entry name" value="Lipoyl_synth"/>
    <property type="match status" value="1"/>
</dbReference>
<dbReference type="SFLD" id="SFLDF00271">
    <property type="entry name" value="lipoyl_synthase"/>
    <property type="match status" value="1"/>
</dbReference>
<dbReference type="SFLD" id="SFLDS00029">
    <property type="entry name" value="Radical_SAM"/>
    <property type="match status" value="1"/>
</dbReference>
<dbReference type="SMART" id="SM00729">
    <property type="entry name" value="Elp3"/>
    <property type="match status" value="1"/>
</dbReference>
<dbReference type="SUPFAM" id="SSF102114">
    <property type="entry name" value="Radical SAM enzymes"/>
    <property type="match status" value="1"/>
</dbReference>
<dbReference type="PROSITE" id="PS51918">
    <property type="entry name" value="RADICAL_SAM"/>
    <property type="match status" value="1"/>
</dbReference>
<gene>
    <name evidence="1" type="primary">lipA</name>
    <name type="ordered locus">VV1_0284</name>
</gene>
<proteinExistence type="inferred from homology"/>
<organism>
    <name type="scientific">Vibrio vulnificus (strain CMCP6)</name>
    <dbReference type="NCBI Taxonomy" id="216895"/>
    <lineage>
        <taxon>Bacteria</taxon>
        <taxon>Pseudomonadati</taxon>
        <taxon>Pseudomonadota</taxon>
        <taxon>Gammaproteobacteria</taxon>
        <taxon>Vibrionales</taxon>
        <taxon>Vibrionaceae</taxon>
        <taxon>Vibrio</taxon>
    </lineage>
</organism>
<sequence>MSKPIQMEKGVKYRDADKMALIPVKNMPTEQKEVLRKPDWMKIKLPADSQRIQDIKSAMRKNNLHSVCEEASCPNLAECFNHGTATFMILGAICTRRCPFCDVAHGRPLPPEAEEPTKLAKTIADMKLKYVVITSVDRDDLRDGGAKHFADCNREIRAQSPHIRIETLVPDFRGRMDVALEALKDNPPDVFNHNLETAPRLYRKVRPGANYQWSLDLLKKFKEQHPDVPTKSGLMMGLGETKEEIVEVLKDLRAHGVTMLTLGQYLAPSRHHLPVERYVPPAEFDELKEIALELGFTHAACGPFVRSSYHADMQAQGLEVK</sequence>
<evidence type="ECO:0000255" key="1">
    <source>
        <dbReference type="HAMAP-Rule" id="MF_00206"/>
    </source>
</evidence>
<evidence type="ECO:0000255" key="2">
    <source>
        <dbReference type="PROSITE-ProRule" id="PRU01266"/>
    </source>
</evidence>
<protein>
    <recommendedName>
        <fullName evidence="1">Lipoyl synthase</fullName>
        <ecNumber evidence="1">2.8.1.8</ecNumber>
    </recommendedName>
    <alternativeName>
        <fullName evidence="1">Lip-syn</fullName>
        <shortName evidence="1">LS</shortName>
    </alternativeName>
    <alternativeName>
        <fullName evidence="1">Lipoate synthase</fullName>
    </alternativeName>
    <alternativeName>
        <fullName evidence="1">Lipoic acid synthase</fullName>
    </alternativeName>
    <alternativeName>
        <fullName evidence="1">Sulfur insertion protein LipA</fullName>
    </alternativeName>
</protein>
<reference key="1">
    <citation type="submission" date="2002-12" db="EMBL/GenBank/DDBJ databases">
        <title>Complete genome sequence of Vibrio vulnificus CMCP6.</title>
        <authorList>
            <person name="Rhee J.H."/>
            <person name="Kim S.Y."/>
            <person name="Chung S.S."/>
            <person name="Kim J.J."/>
            <person name="Moon Y.H."/>
            <person name="Jeong H."/>
            <person name="Choy H.E."/>
        </authorList>
    </citation>
    <scope>NUCLEOTIDE SEQUENCE [LARGE SCALE GENOMIC DNA]</scope>
    <source>
        <strain>CMCP6</strain>
    </source>
</reference>
<keyword id="KW-0004">4Fe-4S</keyword>
<keyword id="KW-0963">Cytoplasm</keyword>
<keyword id="KW-0408">Iron</keyword>
<keyword id="KW-0411">Iron-sulfur</keyword>
<keyword id="KW-0479">Metal-binding</keyword>
<keyword id="KW-0949">S-adenosyl-L-methionine</keyword>
<keyword id="KW-0808">Transferase</keyword>
<feature type="chain" id="PRO_0000102379" description="Lipoyl synthase">
    <location>
        <begin position="1"/>
        <end position="321"/>
    </location>
</feature>
<feature type="domain" description="Radical SAM core" evidence="2">
    <location>
        <begin position="80"/>
        <end position="297"/>
    </location>
</feature>
<feature type="binding site" evidence="1">
    <location>
        <position position="68"/>
    </location>
    <ligand>
        <name>[4Fe-4S] cluster</name>
        <dbReference type="ChEBI" id="CHEBI:49883"/>
        <label>1</label>
    </ligand>
</feature>
<feature type="binding site" evidence="1">
    <location>
        <position position="73"/>
    </location>
    <ligand>
        <name>[4Fe-4S] cluster</name>
        <dbReference type="ChEBI" id="CHEBI:49883"/>
        <label>1</label>
    </ligand>
</feature>
<feature type="binding site" evidence="1">
    <location>
        <position position="79"/>
    </location>
    <ligand>
        <name>[4Fe-4S] cluster</name>
        <dbReference type="ChEBI" id="CHEBI:49883"/>
        <label>1</label>
    </ligand>
</feature>
<feature type="binding site" evidence="1">
    <location>
        <position position="94"/>
    </location>
    <ligand>
        <name>[4Fe-4S] cluster</name>
        <dbReference type="ChEBI" id="CHEBI:49883"/>
        <label>2</label>
        <note>4Fe-4S-S-AdoMet</note>
    </ligand>
</feature>
<feature type="binding site" evidence="1">
    <location>
        <position position="98"/>
    </location>
    <ligand>
        <name>[4Fe-4S] cluster</name>
        <dbReference type="ChEBI" id="CHEBI:49883"/>
        <label>2</label>
        <note>4Fe-4S-S-AdoMet</note>
    </ligand>
</feature>
<feature type="binding site" evidence="1">
    <location>
        <position position="101"/>
    </location>
    <ligand>
        <name>[4Fe-4S] cluster</name>
        <dbReference type="ChEBI" id="CHEBI:49883"/>
        <label>2</label>
        <note>4Fe-4S-S-AdoMet</note>
    </ligand>
</feature>
<feature type="binding site" evidence="1">
    <location>
        <position position="308"/>
    </location>
    <ligand>
        <name>[4Fe-4S] cluster</name>
        <dbReference type="ChEBI" id="CHEBI:49883"/>
        <label>1</label>
    </ligand>
</feature>
<comment type="function">
    <text evidence="1">Catalyzes the radical-mediated insertion of two sulfur atoms into the C-6 and C-8 positions of the octanoyl moiety bound to the lipoyl domains of lipoate-dependent enzymes, thereby converting the octanoylated domains into lipoylated derivatives.</text>
</comment>
<comment type="catalytic activity">
    <reaction evidence="1">
        <text>[[Fe-S] cluster scaffold protein carrying a second [4Fe-4S](2+) cluster] + N(6)-octanoyl-L-lysyl-[protein] + 2 oxidized [2Fe-2S]-[ferredoxin] + 2 S-adenosyl-L-methionine + 4 H(+) = [[Fe-S] cluster scaffold protein] + N(6)-[(R)-dihydrolipoyl]-L-lysyl-[protein] + 4 Fe(3+) + 2 hydrogen sulfide + 2 5'-deoxyadenosine + 2 L-methionine + 2 reduced [2Fe-2S]-[ferredoxin]</text>
        <dbReference type="Rhea" id="RHEA:16585"/>
        <dbReference type="Rhea" id="RHEA-COMP:9928"/>
        <dbReference type="Rhea" id="RHEA-COMP:10000"/>
        <dbReference type="Rhea" id="RHEA-COMP:10001"/>
        <dbReference type="Rhea" id="RHEA-COMP:10475"/>
        <dbReference type="Rhea" id="RHEA-COMP:14568"/>
        <dbReference type="Rhea" id="RHEA-COMP:14569"/>
        <dbReference type="ChEBI" id="CHEBI:15378"/>
        <dbReference type="ChEBI" id="CHEBI:17319"/>
        <dbReference type="ChEBI" id="CHEBI:29034"/>
        <dbReference type="ChEBI" id="CHEBI:29919"/>
        <dbReference type="ChEBI" id="CHEBI:33722"/>
        <dbReference type="ChEBI" id="CHEBI:33737"/>
        <dbReference type="ChEBI" id="CHEBI:33738"/>
        <dbReference type="ChEBI" id="CHEBI:57844"/>
        <dbReference type="ChEBI" id="CHEBI:59789"/>
        <dbReference type="ChEBI" id="CHEBI:78809"/>
        <dbReference type="ChEBI" id="CHEBI:83100"/>
        <dbReference type="EC" id="2.8.1.8"/>
    </reaction>
</comment>
<comment type="cofactor">
    <cofactor evidence="1">
        <name>[4Fe-4S] cluster</name>
        <dbReference type="ChEBI" id="CHEBI:49883"/>
    </cofactor>
    <text evidence="1">Binds 2 [4Fe-4S] clusters per subunit. One cluster is coordinated with 3 cysteines and an exchangeable S-adenosyl-L-methionine.</text>
</comment>
<comment type="pathway">
    <text evidence="1">Protein modification; protein lipoylation via endogenous pathway; protein N(6)-(lipoyl)lysine from octanoyl-[acyl-carrier-protein]: step 2/2.</text>
</comment>
<comment type="subcellular location">
    <subcellularLocation>
        <location evidence="1">Cytoplasm</location>
    </subcellularLocation>
</comment>
<comment type="similarity">
    <text evidence="1">Belongs to the radical SAM superfamily. Lipoyl synthase family.</text>
</comment>